<feature type="chain" id="PRO_0000112419" description="N-acetyl-gamma-glutamyl-phosphate reductase">
    <location>
        <begin position="1"/>
        <end position="343"/>
    </location>
</feature>
<feature type="active site" evidence="1">
    <location>
        <position position="147"/>
    </location>
</feature>
<name>ARGC_LISMO</name>
<comment type="function">
    <text evidence="1">Catalyzes the NADPH-dependent reduction of N-acetyl-5-glutamyl phosphate to yield N-acetyl-L-glutamate 5-semialdehyde.</text>
</comment>
<comment type="catalytic activity">
    <reaction evidence="1">
        <text>N-acetyl-L-glutamate 5-semialdehyde + phosphate + NADP(+) = N-acetyl-L-glutamyl 5-phosphate + NADPH + H(+)</text>
        <dbReference type="Rhea" id="RHEA:21588"/>
        <dbReference type="ChEBI" id="CHEBI:15378"/>
        <dbReference type="ChEBI" id="CHEBI:29123"/>
        <dbReference type="ChEBI" id="CHEBI:43474"/>
        <dbReference type="ChEBI" id="CHEBI:57783"/>
        <dbReference type="ChEBI" id="CHEBI:57936"/>
        <dbReference type="ChEBI" id="CHEBI:58349"/>
        <dbReference type="EC" id="1.2.1.38"/>
    </reaction>
</comment>
<comment type="pathway">
    <text evidence="1">Amino-acid biosynthesis; L-arginine biosynthesis; N(2)-acetyl-L-ornithine from L-glutamate: step 3/4.</text>
</comment>
<comment type="subcellular location">
    <subcellularLocation>
        <location evidence="1">Cytoplasm</location>
    </subcellularLocation>
</comment>
<comment type="similarity">
    <text evidence="1">Belongs to the NAGSA dehydrogenase family. Type 1 subfamily.</text>
</comment>
<proteinExistence type="inferred from homology"/>
<accession>Q8Y6U1</accession>
<reference key="1">
    <citation type="journal article" date="2001" name="Science">
        <title>Comparative genomics of Listeria species.</title>
        <authorList>
            <person name="Glaser P."/>
            <person name="Frangeul L."/>
            <person name="Buchrieser C."/>
            <person name="Rusniok C."/>
            <person name="Amend A."/>
            <person name="Baquero F."/>
            <person name="Berche P."/>
            <person name="Bloecker H."/>
            <person name="Brandt P."/>
            <person name="Chakraborty T."/>
            <person name="Charbit A."/>
            <person name="Chetouani F."/>
            <person name="Couve E."/>
            <person name="de Daruvar A."/>
            <person name="Dehoux P."/>
            <person name="Domann E."/>
            <person name="Dominguez-Bernal G."/>
            <person name="Duchaud E."/>
            <person name="Durant L."/>
            <person name="Dussurget O."/>
            <person name="Entian K.-D."/>
            <person name="Fsihi H."/>
            <person name="Garcia-del Portillo F."/>
            <person name="Garrido P."/>
            <person name="Gautier L."/>
            <person name="Goebel W."/>
            <person name="Gomez-Lopez N."/>
            <person name="Hain T."/>
            <person name="Hauf J."/>
            <person name="Jackson D."/>
            <person name="Jones L.-M."/>
            <person name="Kaerst U."/>
            <person name="Kreft J."/>
            <person name="Kuhn M."/>
            <person name="Kunst F."/>
            <person name="Kurapkat G."/>
            <person name="Madueno E."/>
            <person name="Maitournam A."/>
            <person name="Mata Vicente J."/>
            <person name="Ng E."/>
            <person name="Nedjari H."/>
            <person name="Nordsiek G."/>
            <person name="Novella S."/>
            <person name="de Pablos B."/>
            <person name="Perez-Diaz J.-C."/>
            <person name="Purcell R."/>
            <person name="Remmel B."/>
            <person name="Rose M."/>
            <person name="Schlueter T."/>
            <person name="Simoes N."/>
            <person name="Tierrez A."/>
            <person name="Vazquez-Boland J.-A."/>
            <person name="Voss H."/>
            <person name="Wehland J."/>
            <person name="Cossart P."/>
        </authorList>
    </citation>
    <scope>NUCLEOTIDE SEQUENCE [LARGE SCALE GENOMIC DNA]</scope>
    <source>
        <strain>ATCC BAA-679 / EGD-e</strain>
    </source>
</reference>
<gene>
    <name evidence="1" type="primary">argC</name>
    <name type="ordered locus">lmo1591</name>
</gene>
<protein>
    <recommendedName>
        <fullName evidence="1">N-acetyl-gamma-glutamyl-phosphate reductase</fullName>
        <shortName evidence="1">AGPR</shortName>
        <ecNumber evidence="1">1.2.1.38</ecNumber>
    </recommendedName>
    <alternativeName>
        <fullName evidence="1">N-acetyl-glutamate semialdehyde dehydrogenase</fullName>
        <shortName evidence="1">NAGSA dehydrogenase</shortName>
    </alternativeName>
</protein>
<evidence type="ECO:0000255" key="1">
    <source>
        <dbReference type="HAMAP-Rule" id="MF_00150"/>
    </source>
</evidence>
<dbReference type="EC" id="1.2.1.38" evidence="1"/>
<dbReference type="EMBL" id="AL591979">
    <property type="protein sequence ID" value="CAC99669.1"/>
    <property type="molecule type" value="Genomic_DNA"/>
</dbReference>
<dbReference type="PIR" id="AG1273">
    <property type="entry name" value="AG1273"/>
</dbReference>
<dbReference type="RefSeq" id="NP_465116.1">
    <property type="nucleotide sequence ID" value="NC_003210.1"/>
</dbReference>
<dbReference type="RefSeq" id="WP_009931826.1">
    <property type="nucleotide sequence ID" value="NZ_CP149495.1"/>
</dbReference>
<dbReference type="SMR" id="Q8Y6U1"/>
<dbReference type="STRING" id="169963.gene:17594248"/>
<dbReference type="PaxDb" id="169963-lmo1591"/>
<dbReference type="EnsemblBacteria" id="CAC99669">
    <property type="protein sequence ID" value="CAC99669"/>
    <property type="gene ID" value="CAC99669"/>
</dbReference>
<dbReference type="GeneID" id="984694"/>
<dbReference type="KEGG" id="lmo:lmo1591"/>
<dbReference type="PATRIC" id="fig|169963.11.peg.1633"/>
<dbReference type="eggNOG" id="COG0002">
    <property type="taxonomic scope" value="Bacteria"/>
</dbReference>
<dbReference type="HOGENOM" id="CLU_006384_0_1_9"/>
<dbReference type="OrthoDB" id="9801289at2"/>
<dbReference type="PhylomeDB" id="Q8Y6U1"/>
<dbReference type="BioCyc" id="LMON169963:LMO1591-MONOMER"/>
<dbReference type="UniPathway" id="UPA00068">
    <property type="reaction ID" value="UER00108"/>
</dbReference>
<dbReference type="Proteomes" id="UP000000817">
    <property type="component" value="Chromosome"/>
</dbReference>
<dbReference type="GO" id="GO:0005737">
    <property type="term" value="C:cytoplasm"/>
    <property type="evidence" value="ECO:0007669"/>
    <property type="project" value="UniProtKB-SubCell"/>
</dbReference>
<dbReference type="GO" id="GO:0003942">
    <property type="term" value="F:N-acetyl-gamma-glutamyl-phosphate reductase activity"/>
    <property type="evidence" value="ECO:0007669"/>
    <property type="project" value="UniProtKB-UniRule"/>
</dbReference>
<dbReference type="GO" id="GO:0051287">
    <property type="term" value="F:NAD binding"/>
    <property type="evidence" value="ECO:0007669"/>
    <property type="project" value="InterPro"/>
</dbReference>
<dbReference type="GO" id="GO:0070401">
    <property type="term" value="F:NADP+ binding"/>
    <property type="evidence" value="ECO:0007669"/>
    <property type="project" value="InterPro"/>
</dbReference>
<dbReference type="GO" id="GO:0006526">
    <property type="term" value="P:L-arginine biosynthetic process"/>
    <property type="evidence" value="ECO:0007669"/>
    <property type="project" value="UniProtKB-UniRule"/>
</dbReference>
<dbReference type="CDD" id="cd23934">
    <property type="entry name" value="AGPR_1_C"/>
    <property type="match status" value="1"/>
</dbReference>
<dbReference type="CDD" id="cd17895">
    <property type="entry name" value="AGPR_1_N"/>
    <property type="match status" value="1"/>
</dbReference>
<dbReference type="FunFam" id="3.30.360.10:FF:000014">
    <property type="entry name" value="N-acetyl-gamma-glutamyl-phosphate reductase"/>
    <property type="match status" value="1"/>
</dbReference>
<dbReference type="Gene3D" id="3.30.360.10">
    <property type="entry name" value="Dihydrodipicolinate Reductase, domain 2"/>
    <property type="match status" value="1"/>
</dbReference>
<dbReference type="Gene3D" id="3.40.50.720">
    <property type="entry name" value="NAD(P)-binding Rossmann-like Domain"/>
    <property type="match status" value="1"/>
</dbReference>
<dbReference type="HAMAP" id="MF_00150">
    <property type="entry name" value="ArgC_type1"/>
    <property type="match status" value="1"/>
</dbReference>
<dbReference type="InterPro" id="IPR023013">
    <property type="entry name" value="AGPR_AS"/>
</dbReference>
<dbReference type="InterPro" id="IPR000706">
    <property type="entry name" value="AGPR_type-1"/>
</dbReference>
<dbReference type="InterPro" id="IPR036291">
    <property type="entry name" value="NAD(P)-bd_dom_sf"/>
</dbReference>
<dbReference type="InterPro" id="IPR050085">
    <property type="entry name" value="NAGSA_dehydrogenase"/>
</dbReference>
<dbReference type="InterPro" id="IPR000534">
    <property type="entry name" value="Semialdehyde_DH_NAD-bd"/>
</dbReference>
<dbReference type="NCBIfam" id="TIGR01850">
    <property type="entry name" value="argC"/>
    <property type="match status" value="1"/>
</dbReference>
<dbReference type="PANTHER" id="PTHR32338:SF10">
    <property type="entry name" value="N-ACETYL-GAMMA-GLUTAMYL-PHOSPHATE REDUCTASE, CHLOROPLASTIC-RELATED"/>
    <property type="match status" value="1"/>
</dbReference>
<dbReference type="PANTHER" id="PTHR32338">
    <property type="entry name" value="N-ACETYL-GAMMA-GLUTAMYL-PHOSPHATE REDUCTASE, CHLOROPLASTIC-RELATED-RELATED"/>
    <property type="match status" value="1"/>
</dbReference>
<dbReference type="Pfam" id="PF01118">
    <property type="entry name" value="Semialdhyde_dh"/>
    <property type="match status" value="1"/>
</dbReference>
<dbReference type="Pfam" id="PF22698">
    <property type="entry name" value="Semialdhyde_dhC_1"/>
    <property type="match status" value="1"/>
</dbReference>
<dbReference type="SMART" id="SM00859">
    <property type="entry name" value="Semialdhyde_dh"/>
    <property type="match status" value="1"/>
</dbReference>
<dbReference type="SUPFAM" id="SSF55347">
    <property type="entry name" value="Glyceraldehyde-3-phosphate dehydrogenase-like, C-terminal domain"/>
    <property type="match status" value="1"/>
</dbReference>
<dbReference type="SUPFAM" id="SSF51735">
    <property type="entry name" value="NAD(P)-binding Rossmann-fold domains"/>
    <property type="match status" value="1"/>
</dbReference>
<dbReference type="PROSITE" id="PS01224">
    <property type="entry name" value="ARGC"/>
    <property type="match status" value="1"/>
</dbReference>
<keyword id="KW-0028">Amino-acid biosynthesis</keyword>
<keyword id="KW-0055">Arginine biosynthesis</keyword>
<keyword id="KW-0963">Cytoplasm</keyword>
<keyword id="KW-0521">NADP</keyword>
<keyword id="KW-0560">Oxidoreductase</keyword>
<keyword id="KW-1185">Reference proteome</keyword>
<sequence>MKVSIIGATGYGGLELIRLLHQHSSVDIATLHSFSAQAETLATFYPHLKDLAVSPLEKINPTEIIEKSDTVFIATPSGIAKDIALPYVDAGLNVIDLSGDFRLKDRQLYEKWYGKSAAPTEYIGKAEYGLAEFREKKETTFIANPGCYATATLLGLAPLATNKLIDPTSIIVDAKSGISGAGKVPSASTHFTETNENMTLYKMNSHQHIPEIMQQLTKWDESIPAIQFSTSLIPITRGIFTTIYVKPKNPITQKELHKLYESTYDNAPFVRIQPENVYPTVKQVTASNYCDIGLAYNEKTNVITIVSVIDNLVKGAAGQAIQNLNIMANFAESDGLRFIPVYP</sequence>
<organism>
    <name type="scientific">Listeria monocytogenes serovar 1/2a (strain ATCC BAA-679 / EGD-e)</name>
    <dbReference type="NCBI Taxonomy" id="169963"/>
    <lineage>
        <taxon>Bacteria</taxon>
        <taxon>Bacillati</taxon>
        <taxon>Bacillota</taxon>
        <taxon>Bacilli</taxon>
        <taxon>Bacillales</taxon>
        <taxon>Listeriaceae</taxon>
        <taxon>Listeria</taxon>
    </lineage>
</organism>